<accession>Q6F793</accession>
<evidence type="ECO:0000255" key="1">
    <source>
        <dbReference type="HAMAP-Rule" id="MF_01522"/>
    </source>
</evidence>
<name>KUP_ACIAD</name>
<protein>
    <recommendedName>
        <fullName evidence="1">Probable potassium transport system protein Kup</fullName>
    </recommendedName>
</protein>
<dbReference type="EMBL" id="CR543861">
    <property type="protein sequence ID" value="CAG70072.1"/>
    <property type="molecule type" value="Genomic_DNA"/>
</dbReference>
<dbReference type="RefSeq" id="WP_004923580.1">
    <property type="nucleotide sequence ID" value="NC_005966.1"/>
</dbReference>
<dbReference type="STRING" id="202950.GCA_001485005_02248"/>
<dbReference type="GeneID" id="45235604"/>
<dbReference type="KEGG" id="aci:ACIAD3412"/>
<dbReference type="eggNOG" id="COG3158">
    <property type="taxonomic scope" value="Bacteria"/>
</dbReference>
<dbReference type="HOGENOM" id="CLU_008142_4_2_6"/>
<dbReference type="OrthoDB" id="9805577at2"/>
<dbReference type="BioCyc" id="ASP62977:ACIAD_RS15445-MONOMER"/>
<dbReference type="Proteomes" id="UP000000430">
    <property type="component" value="Chromosome"/>
</dbReference>
<dbReference type="GO" id="GO:0005886">
    <property type="term" value="C:plasma membrane"/>
    <property type="evidence" value="ECO:0007669"/>
    <property type="project" value="UniProtKB-SubCell"/>
</dbReference>
<dbReference type="GO" id="GO:0015079">
    <property type="term" value="F:potassium ion transmembrane transporter activity"/>
    <property type="evidence" value="ECO:0007669"/>
    <property type="project" value="UniProtKB-UniRule"/>
</dbReference>
<dbReference type="GO" id="GO:0015293">
    <property type="term" value="F:symporter activity"/>
    <property type="evidence" value="ECO:0007669"/>
    <property type="project" value="UniProtKB-UniRule"/>
</dbReference>
<dbReference type="HAMAP" id="MF_01522">
    <property type="entry name" value="Kup"/>
    <property type="match status" value="1"/>
</dbReference>
<dbReference type="InterPro" id="IPR003855">
    <property type="entry name" value="K+_transporter"/>
</dbReference>
<dbReference type="InterPro" id="IPR053952">
    <property type="entry name" value="K_trans_C"/>
</dbReference>
<dbReference type="InterPro" id="IPR053951">
    <property type="entry name" value="K_trans_N"/>
</dbReference>
<dbReference type="InterPro" id="IPR023051">
    <property type="entry name" value="Kup"/>
</dbReference>
<dbReference type="PANTHER" id="PTHR30540:SF79">
    <property type="entry name" value="LOW AFFINITY POTASSIUM TRANSPORT SYSTEM PROTEIN KUP"/>
    <property type="match status" value="1"/>
</dbReference>
<dbReference type="PANTHER" id="PTHR30540">
    <property type="entry name" value="OSMOTIC STRESS POTASSIUM TRANSPORTER"/>
    <property type="match status" value="1"/>
</dbReference>
<dbReference type="Pfam" id="PF02705">
    <property type="entry name" value="K_trans"/>
    <property type="match status" value="1"/>
</dbReference>
<dbReference type="Pfam" id="PF22776">
    <property type="entry name" value="K_trans_C"/>
    <property type="match status" value="1"/>
</dbReference>
<keyword id="KW-0997">Cell inner membrane</keyword>
<keyword id="KW-1003">Cell membrane</keyword>
<keyword id="KW-0406">Ion transport</keyword>
<keyword id="KW-0472">Membrane</keyword>
<keyword id="KW-0630">Potassium</keyword>
<keyword id="KW-0633">Potassium transport</keyword>
<keyword id="KW-0769">Symport</keyword>
<keyword id="KW-0812">Transmembrane</keyword>
<keyword id="KW-1133">Transmembrane helix</keyword>
<keyword id="KW-0813">Transport</keyword>
<organism>
    <name type="scientific">Acinetobacter baylyi (strain ATCC 33305 / BD413 / ADP1)</name>
    <dbReference type="NCBI Taxonomy" id="62977"/>
    <lineage>
        <taxon>Bacteria</taxon>
        <taxon>Pseudomonadati</taxon>
        <taxon>Pseudomonadota</taxon>
        <taxon>Gammaproteobacteria</taxon>
        <taxon>Moraxellales</taxon>
        <taxon>Moraxellaceae</taxon>
        <taxon>Acinetobacter</taxon>
    </lineage>
</organism>
<sequence length="626" mass="69410">MQSSAKKVALPAMTLAALGVVFGDIGTSPLYAFAQTFTSAHVNISEATVFGILSLIFWCITLSISFKYVSIVMRADNNGEGGIMSLLALLLRIKQLDSNKKIYLIALGFVGASLFFGDGIITPAISVLSAIEGLSIATPAFDRWLIPIGLGILTALFMVQRHGTATMGKFFGPITMLWFISIGALGLYSIIQTPHILWFINPIWAIEFAIHQPFVAFVAMGSVVLTMTGGEALYADMGHFGRMPIRLAWFIVVCPSLMLNYAGQGALLLRDPQAVSNPFYLLVPEWALFPMIGLATAAAVIASQAVITGVFSMVNQAIQLRYLPRLTVIHTSDVEQGQIYVPFINWVLYISVFFLIILFESSSNLASAYGVAVTMTMLCVTILISVLAYGAWGWPWWKVTLFAVPFLALDGIFVASTSLKILSGGWVPFVIGVVVFTILMTWKRGREIVFNRLETDALPISLFIKSIGSSAETHFVPGDAVFLTGNPNIVPHAMLHNIKHNKVLHSRNIMVTVYTEDIPYVAKEQRVQLEKMDEHFYRISMYYGFKDQPNIPQALEQAYQALDLEFDMMQISFFISRDRLIHTVGDGMSPWREKLFISMQRNTSPVSDFYQIPPNRVVEMGSQIEI</sequence>
<proteinExistence type="inferred from homology"/>
<gene>
    <name evidence="1" type="primary">kup</name>
    <name type="synonym">trkD</name>
    <name type="ordered locus">ACIAD3412</name>
</gene>
<feature type="chain" id="PRO_0000208986" description="Probable potassium transport system protein Kup">
    <location>
        <begin position="1"/>
        <end position="626"/>
    </location>
</feature>
<feature type="transmembrane region" description="Helical" evidence="1">
    <location>
        <begin position="8"/>
        <end position="28"/>
    </location>
</feature>
<feature type="transmembrane region" description="Helical" evidence="1">
    <location>
        <begin position="44"/>
        <end position="64"/>
    </location>
</feature>
<feature type="transmembrane region" description="Helical" evidence="1">
    <location>
        <begin position="102"/>
        <end position="122"/>
    </location>
</feature>
<feature type="transmembrane region" description="Helical" evidence="1">
    <location>
        <begin position="139"/>
        <end position="159"/>
    </location>
</feature>
<feature type="transmembrane region" description="Helical" evidence="1">
    <location>
        <begin position="171"/>
        <end position="191"/>
    </location>
</feature>
<feature type="transmembrane region" description="Helical" evidence="1">
    <location>
        <begin position="196"/>
        <end position="216"/>
    </location>
</feature>
<feature type="transmembrane region" description="Helical" evidence="1">
    <location>
        <begin position="217"/>
        <end position="237"/>
    </location>
</feature>
<feature type="transmembrane region" description="Helical" evidence="1">
    <location>
        <begin position="249"/>
        <end position="269"/>
    </location>
</feature>
<feature type="transmembrane region" description="Helical" evidence="1">
    <location>
        <begin position="281"/>
        <end position="301"/>
    </location>
</feature>
<feature type="transmembrane region" description="Helical" evidence="1">
    <location>
        <begin position="339"/>
        <end position="359"/>
    </location>
</feature>
<feature type="transmembrane region" description="Helical" evidence="1">
    <location>
        <begin position="377"/>
        <end position="397"/>
    </location>
</feature>
<feature type="transmembrane region" description="Helical" evidence="1">
    <location>
        <begin position="399"/>
        <end position="419"/>
    </location>
</feature>
<feature type="transmembrane region" description="Helical" evidence="1">
    <location>
        <begin position="421"/>
        <end position="441"/>
    </location>
</feature>
<reference key="1">
    <citation type="journal article" date="2004" name="Nucleic Acids Res.">
        <title>Unique features revealed by the genome sequence of Acinetobacter sp. ADP1, a versatile and naturally transformation competent bacterium.</title>
        <authorList>
            <person name="Barbe V."/>
            <person name="Vallenet D."/>
            <person name="Fonknechten N."/>
            <person name="Kreimeyer A."/>
            <person name="Oztas S."/>
            <person name="Labarre L."/>
            <person name="Cruveiller S."/>
            <person name="Robert C."/>
            <person name="Duprat S."/>
            <person name="Wincker P."/>
            <person name="Ornston L.N."/>
            <person name="Weissenbach J."/>
            <person name="Marliere P."/>
            <person name="Cohen G.N."/>
            <person name="Medigue C."/>
        </authorList>
    </citation>
    <scope>NUCLEOTIDE SEQUENCE [LARGE SCALE GENOMIC DNA]</scope>
    <source>
        <strain>ATCC 33305 / BD413 / ADP1</strain>
    </source>
</reference>
<comment type="function">
    <text evidence="1">Transport of potassium into the cell. Likely operates as a K(+):H(+) symporter.</text>
</comment>
<comment type="catalytic activity">
    <reaction evidence="1">
        <text>K(+)(in) + H(+)(in) = K(+)(out) + H(+)(out)</text>
        <dbReference type="Rhea" id="RHEA:28490"/>
        <dbReference type="ChEBI" id="CHEBI:15378"/>
        <dbReference type="ChEBI" id="CHEBI:29103"/>
    </reaction>
    <physiologicalReaction direction="right-to-left" evidence="1">
        <dbReference type="Rhea" id="RHEA:28492"/>
    </physiologicalReaction>
</comment>
<comment type="subcellular location">
    <subcellularLocation>
        <location evidence="1">Cell inner membrane</location>
        <topology evidence="1">Multi-pass membrane protein</topology>
    </subcellularLocation>
</comment>
<comment type="similarity">
    <text evidence="1">Belongs to the HAK/KUP transporter (TC 2.A.72) family.</text>
</comment>